<sequence>MSFQGKKSIPRITSDRLLIKGGKIVNDDQSFHADLYVEDGLIKQIGENLIVPGGIKTIDAHGLMVLPGGVDVHTRLQMPVMGMTPADDFCQGTKAALAGGTTMILDHVFPDAGVSLLAAYEQWRERADSAACCDYSLHVDIPRWHESTKEELEALVRDKGVNSFLVFMAYKDRCQCTDGQIYEIFSLIRDLGAVAQVHAENGDIVEEEQKRLLEQGITGPEGHVLSHPEEVEAEAVYRAVTIAKQANCPLYVTKVMSKGAADMVAQAKRRGVVVFGEPITASLGTDGSHYWSKNWAKAAAFVTSPPINPDPTTADHLTSLLSSGDLQVTGSAHCTFTTAQKAVGKDNFTLIPEGVNGIEERMSVVWEKCVASGKMDENEFVAVTSTNAAKIFNFYPRKGRVAVGSDADLVIWNPRATKVFSAKSHNLNVEYNIFEGVECRGVPTVVISQGRVVLEDGNLLVTPGAGRFIPRKTFPDFVYKRIKARNRLAEIHGVPRGLYDGPVHEVMLPAKPGSGTQARASCSGKISVPPVRNLHQSGFSLSGSQADDHIARRTAQKIMAPPGGRSNITSLS</sequence>
<evidence type="ECO:0000250" key="1"/>
<evidence type="ECO:0000250" key="2">
    <source>
        <dbReference type="UniProtKB" id="O14531"/>
    </source>
</evidence>
<evidence type="ECO:0000269" key="3">
    <source>
    </source>
</evidence>
<evidence type="ECO:0000269" key="4">
    <source>
    </source>
</evidence>
<evidence type="ECO:0000269" key="5">
    <source>
    </source>
</evidence>
<evidence type="ECO:0000303" key="6">
    <source>
    </source>
</evidence>
<evidence type="ECO:0000305" key="7"/>
<evidence type="ECO:0007744" key="8">
    <source>
    </source>
</evidence>
<reference key="1">
    <citation type="submission" date="1997-08" db="EMBL/GenBank/DDBJ databases">
        <authorList>
            <person name="Hamajima N."/>
            <person name="Kato Y."/>
            <person name="Kouwaki M."/>
            <person name="Wada Y."/>
            <person name="Sasaski M."/>
            <person name="Nonaka M."/>
        </authorList>
    </citation>
    <scope>NUCLEOTIDE SEQUENCE [MRNA] (ISOFORM 1)</scope>
    <source>
        <tissue>Embryo</tissue>
    </source>
</reference>
<reference key="2">
    <citation type="journal article" date="1998" name="Eur. J. Biochem.">
        <title>The Ulip family phosphoproteins -- common and specific properties.</title>
        <authorList>
            <person name="Byk T."/>
            <person name="Ozon S."/>
            <person name="Sobel A."/>
        </authorList>
    </citation>
    <scope>NUCLEOTIDE SEQUENCE [MRNA] (ISOFORM 1)</scope>
    <source>
        <strain>ICR</strain>
        <tissue>Brain</tissue>
    </source>
</reference>
<reference key="3">
    <citation type="journal article" date="2005" name="Science">
        <title>The transcriptional landscape of the mammalian genome.</title>
        <authorList>
            <person name="Carninci P."/>
            <person name="Kasukawa T."/>
            <person name="Katayama S."/>
            <person name="Gough J."/>
            <person name="Frith M.C."/>
            <person name="Maeda N."/>
            <person name="Oyama R."/>
            <person name="Ravasi T."/>
            <person name="Lenhard B."/>
            <person name="Wells C."/>
            <person name="Kodzius R."/>
            <person name="Shimokawa K."/>
            <person name="Bajic V.B."/>
            <person name="Brenner S.E."/>
            <person name="Batalov S."/>
            <person name="Forrest A.R."/>
            <person name="Zavolan M."/>
            <person name="Davis M.J."/>
            <person name="Wilming L.G."/>
            <person name="Aidinis V."/>
            <person name="Allen J.E."/>
            <person name="Ambesi-Impiombato A."/>
            <person name="Apweiler R."/>
            <person name="Aturaliya R.N."/>
            <person name="Bailey T.L."/>
            <person name="Bansal M."/>
            <person name="Baxter L."/>
            <person name="Beisel K.W."/>
            <person name="Bersano T."/>
            <person name="Bono H."/>
            <person name="Chalk A.M."/>
            <person name="Chiu K.P."/>
            <person name="Choudhary V."/>
            <person name="Christoffels A."/>
            <person name="Clutterbuck D.R."/>
            <person name="Crowe M.L."/>
            <person name="Dalla E."/>
            <person name="Dalrymple B.P."/>
            <person name="de Bono B."/>
            <person name="Della Gatta G."/>
            <person name="di Bernardo D."/>
            <person name="Down T."/>
            <person name="Engstrom P."/>
            <person name="Fagiolini M."/>
            <person name="Faulkner G."/>
            <person name="Fletcher C.F."/>
            <person name="Fukushima T."/>
            <person name="Furuno M."/>
            <person name="Futaki S."/>
            <person name="Gariboldi M."/>
            <person name="Georgii-Hemming P."/>
            <person name="Gingeras T.R."/>
            <person name="Gojobori T."/>
            <person name="Green R.E."/>
            <person name="Gustincich S."/>
            <person name="Harbers M."/>
            <person name="Hayashi Y."/>
            <person name="Hensch T.K."/>
            <person name="Hirokawa N."/>
            <person name="Hill D."/>
            <person name="Huminiecki L."/>
            <person name="Iacono M."/>
            <person name="Ikeo K."/>
            <person name="Iwama A."/>
            <person name="Ishikawa T."/>
            <person name="Jakt M."/>
            <person name="Kanapin A."/>
            <person name="Katoh M."/>
            <person name="Kawasawa Y."/>
            <person name="Kelso J."/>
            <person name="Kitamura H."/>
            <person name="Kitano H."/>
            <person name="Kollias G."/>
            <person name="Krishnan S.P."/>
            <person name="Kruger A."/>
            <person name="Kummerfeld S.K."/>
            <person name="Kurochkin I.V."/>
            <person name="Lareau L.F."/>
            <person name="Lazarevic D."/>
            <person name="Lipovich L."/>
            <person name="Liu J."/>
            <person name="Liuni S."/>
            <person name="McWilliam S."/>
            <person name="Madan Babu M."/>
            <person name="Madera M."/>
            <person name="Marchionni L."/>
            <person name="Matsuda H."/>
            <person name="Matsuzawa S."/>
            <person name="Miki H."/>
            <person name="Mignone F."/>
            <person name="Miyake S."/>
            <person name="Morris K."/>
            <person name="Mottagui-Tabar S."/>
            <person name="Mulder N."/>
            <person name="Nakano N."/>
            <person name="Nakauchi H."/>
            <person name="Ng P."/>
            <person name="Nilsson R."/>
            <person name="Nishiguchi S."/>
            <person name="Nishikawa S."/>
            <person name="Nori F."/>
            <person name="Ohara O."/>
            <person name="Okazaki Y."/>
            <person name="Orlando V."/>
            <person name="Pang K.C."/>
            <person name="Pavan W.J."/>
            <person name="Pavesi G."/>
            <person name="Pesole G."/>
            <person name="Petrovsky N."/>
            <person name="Piazza S."/>
            <person name="Reed J."/>
            <person name="Reid J.F."/>
            <person name="Ring B.Z."/>
            <person name="Ringwald M."/>
            <person name="Rost B."/>
            <person name="Ruan Y."/>
            <person name="Salzberg S.L."/>
            <person name="Sandelin A."/>
            <person name="Schneider C."/>
            <person name="Schoenbach C."/>
            <person name="Sekiguchi K."/>
            <person name="Semple C.A."/>
            <person name="Seno S."/>
            <person name="Sessa L."/>
            <person name="Sheng Y."/>
            <person name="Shibata Y."/>
            <person name="Shimada H."/>
            <person name="Shimada K."/>
            <person name="Silva D."/>
            <person name="Sinclair B."/>
            <person name="Sperling S."/>
            <person name="Stupka E."/>
            <person name="Sugiura K."/>
            <person name="Sultana R."/>
            <person name="Takenaka Y."/>
            <person name="Taki K."/>
            <person name="Tammoja K."/>
            <person name="Tan S.L."/>
            <person name="Tang S."/>
            <person name="Taylor M.S."/>
            <person name="Tegner J."/>
            <person name="Teichmann S.A."/>
            <person name="Ueda H.R."/>
            <person name="van Nimwegen E."/>
            <person name="Verardo R."/>
            <person name="Wei C.L."/>
            <person name="Yagi K."/>
            <person name="Yamanishi H."/>
            <person name="Zabarovsky E."/>
            <person name="Zhu S."/>
            <person name="Zimmer A."/>
            <person name="Hide W."/>
            <person name="Bult C."/>
            <person name="Grimmond S.M."/>
            <person name="Teasdale R.D."/>
            <person name="Liu E.T."/>
            <person name="Brusic V."/>
            <person name="Quackenbush J."/>
            <person name="Wahlestedt C."/>
            <person name="Mattick J.S."/>
            <person name="Hume D.A."/>
            <person name="Kai C."/>
            <person name="Sasaki D."/>
            <person name="Tomaru Y."/>
            <person name="Fukuda S."/>
            <person name="Kanamori-Katayama M."/>
            <person name="Suzuki M."/>
            <person name="Aoki J."/>
            <person name="Arakawa T."/>
            <person name="Iida J."/>
            <person name="Imamura K."/>
            <person name="Itoh M."/>
            <person name="Kato T."/>
            <person name="Kawaji H."/>
            <person name="Kawagashira N."/>
            <person name="Kawashima T."/>
            <person name="Kojima M."/>
            <person name="Kondo S."/>
            <person name="Konno H."/>
            <person name="Nakano K."/>
            <person name="Ninomiya N."/>
            <person name="Nishio T."/>
            <person name="Okada M."/>
            <person name="Plessy C."/>
            <person name="Shibata K."/>
            <person name="Shiraki T."/>
            <person name="Suzuki S."/>
            <person name="Tagami M."/>
            <person name="Waki K."/>
            <person name="Watahiki A."/>
            <person name="Okamura-Oho Y."/>
            <person name="Suzuki H."/>
            <person name="Kawai J."/>
            <person name="Hayashizaki Y."/>
        </authorList>
    </citation>
    <scope>NUCLEOTIDE SEQUENCE [LARGE SCALE MRNA] (ISOFORM 2)</scope>
    <source>
        <strain>C57BL/6J</strain>
    </source>
</reference>
<reference key="4">
    <citation type="submission" date="2007-03" db="UniProtKB">
        <authorList>
            <person name="Lubec G."/>
            <person name="Klug S."/>
        </authorList>
    </citation>
    <scope>PROTEIN SEQUENCE OF 346-361</scope>
    <scope>IDENTIFICATION BY MASS SPECTROMETRY</scope>
    <source>
        <tissue>Hippocampus</tissue>
    </source>
</reference>
<reference key="5">
    <citation type="journal article" date="1997" name="J. Neurochem.">
        <title>Brain CRMP forms heterotetramers similar to liver dihydropyrimidinase.</title>
        <authorList>
            <person name="Wang L.H."/>
            <person name="Strittmatter S.M."/>
        </authorList>
    </citation>
    <scope>INTERACTION WITH DPYSL2</scope>
</reference>
<reference key="6">
    <citation type="journal article" date="2000" name="J. Biol. Chem.">
        <title>Molecular characterization of CRMP5, a novel member of the collapsin response mediator protein family.</title>
        <authorList>
            <person name="Fukada M."/>
            <person name="Watakabe I."/>
            <person name="Yuasa-Kawada J."/>
            <person name="Kawachi H."/>
            <person name="Kuroiwa A."/>
            <person name="Matsuda Y."/>
            <person name="Noda M."/>
        </authorList>
    </citation>
    <scope>SUBUNIT</scope>
</reference>
<reference key="7">
    <citation type="journal article" date="2004" name="EMBO J.">
        <title>Structural bases for CRMP function in plexin-dependent semaphorin3A signaling.</title>
        <authorList>
            <person name="Deo R.C."/>
            <person name="Schmidt E.F."/>
            <person name="Elhabazi A."/>
            <person name="Togashi H."/>
            <person name="Burley S.K."/>
            <person name="Strittmatter S.M."/>
        </authorList>
    </citation>
    <scope>INTERACTION WITH PLEXA1</scope>
    <scope>SUBUNIT</scope>
</reference>
<reference key="8">
    <citation type="journal article" date="2008" name="J. Proteome Res.">
        <title>Large-scale identification and evolution indexing of tyrosine phosphorylation sites from murine brain.</title>
        <authorList>
            <person name="Ballif B.A."/>
            <person name="Carey G.R."/>
            <person name="Sunyaev S.R."/>
            <person name="Gygi S.P."/>
        </authorList>
    </citation>
    <scope>IDENTIFICATION BY MASS SPECTROMETRY [LARGE SCALE ANALYSIS]</scope>
    <source>
        <tissue>Brain</tissue>
    </source>
</reference>
<reference key="9">
    <citation type="journal article" date="2010" name="Cell">
        <title>A tissue-specific atlas of mouse protein phosphorylation and expression.</title>
        <authorList>
            <person name="Huttlin E.L."/>
            <person name="Jedrychowski M.P."/>
            <person name="Elias J.E."/>
            <person name="Goswami T."/>
            <person name="Rad R."/>
            <person name="Beausoleil S.A."/>
            <person name="Villen J."/>
            <person name="Haas W."/>
            <person name="Sowa M.E."/>
            <person name="Gygi S.P."/>
        </authorList>
    </citation>
    <scope>PHOSPHORYLATION [LARGE SCALE ANALYSIS] AT SER-537 AND SER-544</scope>
    <scope>IDENTIFICATION BY MASS SPECTROMETRY [LARGE SCALE ANALYSIS]</scope>
    <source>
        <tissue>Brain</tissue>
        <tissue>Brown adipose tissue</tissue>
        <tissue>Heart</tissue>
        <tissue>Lung</tissue>
        <tissue>Testis</tissue>
    </source>
</reference>
<dbReference type="EMBL" id="AB006715">
    <property type="protein sequence ID" value="BAA21888.1"/>
    <property type="molecule type" value="mRNA"/>
</dbReference>
<dbReference type="EMBL" id="Y09079">
    <property type="protein sequence ID" value="CAA70299.1"/>
    <property type="molecule type" value="mRNA"/>
</dbReference>
<dbReference type="EMBL" id="AK145638">
    <property type="protein sequence ID" value="BAE26556.1"/>
    <property type="molecule type" value="mRNA"/>
</dbReference>
<dbReference type="CCDS" id="CCDS21951.1">
    <molecule id="O35098-1"/>
</dbReference>
<dbReference type="SMR" id="O35098"/>
<dbReference type="FunCoup" id="O35098">
    <property type="interactions" value="272"/>
</dbReference>
<dbReference type="IntAct" id="O35098">
    <property type="interactions" value="2"/>
</dbReference>
<dbReference type="MINT" id="O35098"/>
<dbReference type="STRING" id="10090.ENSMUSP00000026551"/>
<dbReference type="MEROPS" id="M38.977"/>
<dbReference type="GlyGen" id="O35098">
    <property type="glycosylation" value="1 site"/>
</dbReference>
<dbReference type="iPTMnet" id="O35098"/>
<dbReference type="PhosphoSitePlus" id="O35098"/>
<dbReference type="SwissPalm" id="O35098"/>
<dbReference type="REPRODUCTION-2DPAGE" id="O35098"/>
<dbReference type="jPOST" id="O35098"/>
<dbReference type="PaxDb" id="10090-ENSMUSP00000026551"/>
<dbReference type="PeptideAtlas" id="O35098"/>
<dbReference type="ProteomicsDB" id="275400">
    <molecule id="O35098-1"/>
</dbReference>
<dbReference type="ProteomicsDB" id="275401">
    <molecule id="O35098-2"/>
</dbReference>
<dbReference type="Pumba" id="O35098"/>
<dbReference type="UCSC" id="uc009kfk.2">
    <molecule id="O35098-2"/>
    <property type="organism name" value="mouse"/>
</dbReference>
<dbReference type="AGR" id="MGI:1349764"/>
<dbReference type="MGI" id="MGI:1349764">
    <property type="gene designation" value="Dpysl4"/>
</dbReference>
<dbReference type="eggNOG" id="KOG2584">
    <property type="taxonomic scope" value="Eukaryota"/>
</dbReference>
<dbReference type="InParanoid" id="O35098"/>
<dbReference type="PhylomeDB" id="O35098"/>
<dbReference type="Reactome" id="R-MMU-399956">
    <property type="pathway name" value="CRMPs in Sema3A signaling"/>
</dbReference>
<dbReference type="CD-CODE" id="CE726F99">
    <property type="entry name" value="Postsynaptic density"/>
</dbReference>
<dbReference type="PRO" id="PR:O35098"/>
<dbReference type="Proteomes" id="UP000000589">
    <property type="component" value="Unplaced"/>
</dbReference>
<dbReference type="RNAct" id="O35098">
    <property type="molecule type" value="protein"/>
</dbReference>
<dbReference type="GO" id="GO:0005737">
    <property type="term" value="C:cytoplasm"/>
    <property type="evidence" value="ECO:0007669"/>
    <property type="project" value="UniProtKB-SubCell"/>
</dbReference>
<dbReference type="GO" id="GO:0016810">
    <property type="term" value="F:hydrolase activity, acting on carbon-nitrogen (but not peptide) bonds"/>
    <property type="evidence" value="ECO:0007669"/>
    <property type="project" value="InterPro"/>
</dbReference>
<dbReference type="GO" id="GO:0051219">
    <property type="term" value="F:phosphoprotein binding"/>
    <property type="evidence" value="ECO:0000353"/>
    <property type="project" value="BHF-UCL"/>
</dbReference>
<dbReference type="CDD" id="cd01314">
    <property type="entry name" value="D-HYD"/>
    <property type="match status" value="1"/>
</dbReference>
<dbReference type="FunFam" id="3.20.20.140:FF:000254">
    <property type="entry name" value="Dihydropyrimidinase like 2"/>
    <property type="match status" value="1"/>
</dbReference>
<dbReference type="FunFam" id="2.30.40.10:FF:000021">
    <property type="entry name" value="Dihydropyrimidinase-related protein 2"/>
    <property type="match status" value="1"/>
</dbReference>
<dbReference type="Gene3D" id="3.20.20.140">
    <property type="entry name" value="Metal-dependent hydrolases"/>
    <property type="match status" value="1"/>
</dbReference>
<dbReference type="Gene3D" id="2.30.40.10">
    <property type="entry name" value="Urease, subunit C, domain 1"/>
    <property type="match status" value="1"/>
</dbReference>
<dbReference type="InterPro" id="IPR006680">
    <property type="entry name" value="Amidohydro-rel"/>
</dbReference>
<dbReference type="InterPro" id="IPR011778">
    <property type="entry name" value="Hydantoinase/dihydroPyrase"/>
</dbReference>
<dbReference type="InterPro" id="IPR011059">
    <property type="entry name" value="Metal-dep_hydrolase_composite"/>
</dbReference>
<dbReference type="InterPro" id="IPR032466">
    <property type="entry name" value="Metal_Hydrolase"/>
</dbReference>
<dbReference type="InterPro" id="IPR050378">
    <property type="entry name" value="Metallo-dep_Hydrolases_sf"/>
</dbReference>
<dbReference type="NCBIfam" id="TIGR02033">
    <property type="entry name" value="D-hydantoinase"/>
    <property type="match status" value="1"/>
</dbReference>
<dbReference type="PANTHER" id="PTHR11647:SF55">
    <property type="entry name" value="DIHYDROPYRIMIDINASE-RELATED PROTEIN 4"/>
    <property type="match status" value="1"/>
</dbReference>
<dbReference type="PANTHER" id="PTHR11647">
    <property type="entry name" value="HYDRANTOINASE/DIHYDROPYRIMIDINASE FAMILY MEMBER"/>
    <property type="match status" value="1"/>
</dbReference>
<dbReference type="Pfam" id="PF01979">
    <property type="entry name" value="Amidohydro_1"/>
    <property type="match status" value="1"/>
</dbReference>
<dbReference type="SUPFAM" id="SSF51338">
    <property type="entry name" value="Composite domain of metallo-dependent hydrolases"/>
    <property type="match status" value="2"/>
</dbReference>
<dbReference type="SUPFAM" id="SSF51556">
    <property type="entry name" value="Metallo-dependent hydrolases"/>
    <property type="match status" value="1"/>
</dbReference>
<accession>O35098</accession>
<accession>O08886</accession>
<accession>Q3UL94</accession>
<name>DPYL4_MOUSE</name>
<protein>
    <recommendedName>
        <fullName>Dihydropyrimidinase-related protein 4</fullName>
        <shortName>DRP-4</shortName>
    </recommendedName>
    <alternativeName>
        <fullName>Collapsin response mediator protein 3</fullName>
        <shortName>CRMP-3</shortName>
    </alternativeName>
    <alternativeName>
        <fullName>UNC33-like phosphoprotein 4</fullName>
        <shortName>ULIP-4</shortName>
    </alternativeName>
</protein>
<feature type="chain" id="PRO_0000165922" description="Dihydropyrimidinase-related protein 4">
    <location>
        <begin position="1"/>
        <end position="572"/>
    </location>
</feature>
<feature type="modified residue" description="Phosphoserine" evidence="8">
    <location>
        <position position="537"/>
    </location>
</feature>
<feature type="modified residue" description="Phosphoserine" evidence="8">
    <location>
        <position position="544"/>
    </location>
</feature>
<feature type="splice variant" id="VSP_024802" description="In isoform 2." evidence="6">
    <original>MSFQGKKSIPRIT</original>
    <variation>MAYKMSQSISVTLGKDIPSRLRCLPQRPLFSLCQ</variation>
    <location>
        <begin position="1"/>
        <end position="13"/>
    </location>
</feature>
<feature type="sequence conflict" description="In Ref. 2; CAA70299." evidence="7" ref="2">
    <original>ER</original>
    <variation>DG</variation>
    <location>
        <begin position="125"/>
        <end position="126"/>
    </location>
</feature>
<feature type="sequence conflict" description="In Ref. 2; CAA70299." evidence="7" ref="2">
    <original>G</original>
    <variation>V</variation>
    <location>
        <position position="354"/>
    </location>
</feature>
<feature type="sequence conflict" description="In Ref. 2; CAA70299 and 3; BAE26556." evidence="7" ref="2 3">
    <original>F</original>
    <variation>I</variation>
    <location>
        <position position="420"/>
    </location>
</feature>
<gene>
    <name type="primary">Dpysl4</name>
    <name type="synonym">Crmp3</name>
    <name type="synonym">Ulip4</name>
</gene>
<proteinExistence type="evidence at protein level"/>
<organism>
    <name type="scientific">Mus musculus</name>
    <name type="common">Mouse</name>
    <dbReference type="NCBI Taxonomy" id="10090"/>
    <lineage>
        <taxon>Eukaryota</taxon>
        <taxon>Metazoa</taxon>
        <taxon>Chordata</taxon>
        <taxon>Craniata</taxon>
        <taxon>Vertebrata</taxon>
        <taxon>Euteleostomi</taxon>
        <taxon>Mammalia</taxon>
        <taxon>Eutheria</taxon>
        <taxon>Euarchontoglires</taxon>
        <taxon>Glires</taxon>
        <taxon>Rodentia</taxon>
        <taxon>Myomorpha</taxon>
        <taxon>Muroidea</taxon>
        <taxon>Muridae</taxon>
        <taxon>Murinae</taxon>
        <taxon>Mus</taxon>
        <taxon>Mus</taxon>
    </lineage>
</organism>
<comment type="function">
    <text evidence="1">Necessary for signaling by class 3 semaphorins and subsequent remodeling of the cytoskeleton. Plays a role in axon guidance, neuronal growth cone collapse and cell migration (By similarity).</text>
</comment>
<comment type="subunit">
    <text evidence="2 3 4 5">Homotetramer, and heterotetramer with CRMP1, DPYSL2, DPYSL3 or DPYSL5 (PubMed:10956643, PubMed:14685275, PubMed:9375656). Interacts with PLEXA1 (PubMed:14685275). Interacts with FLNA (By similarity).</text>
</comment>
<comment type="subcellular location">
    <subcellularLocation>
        <location evidence="1">Cytoplasm</location>
    </subcellularLocation>
</comment>
<comment type="alternative products">
    <event type="alternative splicing"/>
    <isoform>
        <id>O35098-1</id>
        <name>1</name>
        <sequence type="displayed"/>
    </isoform>
    <isoform>
        <id>O35098-2</id>
        <name>2</name>
        <sequence type="described" ref="VSP_024802"/>
    </isoform>
</comment>
<comment type="similarity">
    <text evidence="7">Belongs to the metallo-dependent hydrolases superfamily. Hydantoinase/dihydropyrimidinase family.</text>
</comment>
<comment type="caution">
    <text evidence="7">Lacks most of the conserved residues that are essential for binding the metal cofactor and hence for dihydropyrimidinase activity. Its enzyme activity is therefore unsure.</text>
</comment>
<keyword id="KW-0025">Alternative splicing</keyword>
<keyword id="KW-0963">Cytoplasm</keyword>
<keyword id="KW-0903">Direct protein sequencing</keyword>
<keyword id="KW-0597">Phosphoprotein</keyword>
<keyword id="KW-1185">Reference proteome</keyword>